<sequence>MRKFAAFACGTGAGFAAYYFQKLRDPLQVVHNSWTNSERHISECALWDSNWDYRDPKSLARPMKNDKPQEQNRYNADLEKNVSKYARHIILIRHGEYLDVGETDETHHLTDRGRLQAKYTGKRLHELGIKWDKVIASNMVRAQETAEIILNEIDFDKTKVKSCSYLREGAPIPPQPPVGHWKPEASQFFRDGARIEAAFRRYFHRALPDQEKDSYTLIVGHGNVIRYFVCRALQFPAEGWLRININHASITWLTISPSGNVSIKYLGDTGFIPAKHLTNRIPREAKNVV</sequence>
<comment type="function">
    <text evidence="1">Displays phosphatase activity for serine/threonine residues, and dephosphorylates and activates Pk92B kinase. Has apparently no phosphoglycerate mutase activity (By similarity).</text>
</comment>
<comment type="catalytic activity">
    <reaction>
        <text>O-phospho-L-seryl-[protein] + H2O = L-seryl-[protein] + phosphate</text>
        <dbReference type="Rhea" id="RHEA:20629"/>
        <dbReference type="Rhea" id="RHEA-COMP:9863"/>
        <dbReference type="Rhea" id="RHEA-COMP:11604"/>
        <dbReference type="ChEBI" id="CHEBI:15377"/>
        <dbReference type="ChEBI" id="CHEBI:29999"/>
        <dbReference type="ChEBI" id="CHEBI:43474"/>
        <dbReference type="ChEBI" id="CHEBI:83421"/>
        <dbReference type="EC" id="3.1.3.16"/>
    </reaction>
</comment>
<comment type="catalytic activity">
    <reaction>
        <text>O-phospho-L-threonyl-[protein] + H2O = L-threonyl-[protein] + phosphate</text>
        <dbReference type="Rhea" id="RHEA:47004"/>
        <dbReference type="Rhea" id="RHEA-COMP:11060"/>
        <dbReference type="Rhea" id="RHEA-COMP:11605"/>
        <dbReference type="ChEBI" id="CHEBI:15377"/>
        <dbReference type="ChEBI" id="CHEBI:30013"/>
        <dbReference type="ChEBI" id="CHEBI:43474"/>
        <dbReference type="ChEBI" id="CHEBI:61977"/>
        <dbReference type="EC" id="3.1.3.16"/>
    </reaction>
</comment>
<comment type="subunit">
    <text evidence="1">Interacts with Pk92B/ASK1.</text>
</comment>
<comment type="subcellular location">
    <subcellularLocation>
        <location evidence="1">Mitochondrion outer membrane</location>
    </subcellularLocation>
</comment>
<comment type="similarity">
    <text evidence="2">Belongs to the phosphoglycerate mutase family. BPG-dependent PGAM subfamily.</text>
</comment>
<accession>B4L6S9</accession>
<name>PGAM5_DROMO</name>
<proteinExistence type="inferred from homology"/>
<reference evidence="3" key="1">
    <citation type="journal article" date="2007" name="Nature">
        <title>Evolution of genes and genomes on the Drosophila phylogeny.</title>
        <authorList>
            <consortium name="Drosophila 12 genomes consortium"/>
        </authorList>
    </citation>
    <scope>NUCLEOTIDE SEQUENCE [LARGE SCALE GENOMIC DNA]</scope>
    <source>
        <strain evidence="3">Tucson 15081-1352.22</strain>
    </source>
</reference>
<gene>
    <name evidence="1" type="primary">Pgam5</name>
    <name type="ORF">GI16420</name>
</gene>
<dbReference type="EC" id="3.1.3.16"/>
<dbReference type="EMBL" id="CH933812">
    <property type="protein sequence ID" value="EDW06075.1"/>
    <property type="molecule type" value="Genomic_DNA"/>
</dbReference>
<dbReference type="SMR" id="B4L6S9"/>
<dbReference type="FunCoup" id="B4L6S9">
    <property type="interactions" value="1029"/>
</dbReference>
<dbReference type="EnsemblMetazoa" id="FBtr0167145">
    <property type="protein sequence ID" value="FBpp0165637"/>
    <property type="gene ID" value="FBgn0139168"/>
</dbReference>
<dbReference type="EnsemblMetazoa" id="XM_002011197.4">
    <property type="protein sequence ID" value="XP_002011233.1"/>
    <property type="gene ID" value="LOC6585605"/>
</dbReference>
<dbReference type="GeneID" id="6585605"/>
<dbReference type="KEGG" id="dmo:Dmoj_GI16420"/>
<dbReference type="CTD" id="192111"/>
<dbReference type="eggNOG" id="KOG4609">
    <property type="taxonomic scope" value="Eukaryota"/>
</dbReference>
<dbReference type="HOGENOM" id="CLU_063130_0_1_1"/>
<dbReference type="InParanoid" id="B4L6S9"/>
<dbReference type="OMA" id="MPMEMIT"/>
<dbReference type="OrthoDB" id="2118094at2759"/>
<dbReference type="PhylomeDB" id="B4L6S9"/>
<dbReference type="Proteomes" id="UP000009192">
    <property type="component" value="Unassembled WGS sequence"/>
</dbReference>
<dbReference type="GO" id="GO:0005741">
    <property type="term" value="C:mitochondrial outer membrane"/>
    <property type="evidence" value="ECO:0007669"/>
    <property type="project" value="UniProtKB-SubCell"/>
</dbReference>
<dbReference type="GO" id="GO:0004721">
    <property type="term" value="F:phosphoprotein phosphatase activity"/>
    <property type="evidence" value="ECO:0000250"/>
    <property type="project" value="UniProtKB"/>
</dbReference>
<dbReference type="GO" id="GO:0004722">
    <property type="term" value="F:protein serine/threonine phosphatase activity"/>
    <property type="evidence" value="ECO:0007669"/>
    <property type="project" value="UniProtKB-EC"/>
</dbReference>
<dbReference type="GO" id="GO:0090141">
    <property type="term" value="P:positive regulation of mitochondrial fission"/>
    <property type="evidence" value="ECO:0007669"/>
    <property type="project" value="TreeGrafter"/>
</dbReference>
<dbReference type="GO" id="GO:0006470">
    <property type="term" value="P:protein dephosphorylation"/>
    <property type="evidence" value="ECO:0000250"/>
    <property type="project" value="UniProtKB"/>
</dbReference>
<dbReference type="CDD" id="cd07067">
    <property type="entry name" value="HP_PGM_like"/>
    <property type="match status" value="1"/>
</dbReference>
<dbReference type="FunFam" id="3.40.50.1240:FF:000009">
    <property type="entry name" value="serine/threonine-protein phosphatase PGAM5, mitochondrial isoform X1"/>
    <property type="match status" value="1"/>
</dbReference>
<dbReference type="Gene3D" id="3.40.50.1240">
    <property type="entry name" value="Phosphoglycerate mutase-like"/>
    <property type="match status" value="1"/>
</dbReference>
<dbReference type="InterPro" id="IPR013078">
    <property type="entry name" value="His_Pase_superF_clade-1"/>
</dbReference>
<dbReference type="InterPro" id="IPR029033">
    <property type="entry name" value="His_PPase_superfam"/>
</dbReference>
<dbReference type="InterPro" id="IPR051021">
    <property type="entry name" value="Mito_Ser/Thr_phosphatase"/>
</dbReference>
<dbReference type="PANTHER" id="PTHR20935">
    <property type="entry name" value="PHOSPHOGLYCERATE MUTASE-RELATED"/>
    <property type="match status" value="1"/>
</dbReference>
<dbReference type="PANTHER" id="PTHR20935:SF0">
    <property type="entry name" value="SERINE_THREONINE-PROTEIN PHOSPHATASE PGAM5, MITOCHONDRIAL"/>
    <property type="match status" value="1"/>
</dbReference>
<dbReference type="Pfam" id="PF00300">
    <property type="entry name" value="His_Phos_1"/>
    <property type="match status" value="2"/>
</dbReference>
<dbReference type="SMART" id="SM00855">
    <property type="entry name" value="PGAM"/>
    <property type="match status" value="1"/>
</dbReference>
<dbReference type="SUPFAM" id="SSF53254">
    <property type="entry name" value="Phosphoglycerate mutase-like"/>
    <property type="match status" value="1"/>
</dbReference>
<organism>
    <name type="scientific">Drosophila mojavensis</name>
    <name type="common">Fruit fly</name>
    <dbReference type="NCBI Taxonomy" id="7230"/>
    <lineage>
        <taxon>Eukaryota</taxon>
        <taxon>Metazoa</taxon>
        <taxon>Ecdysozoa</taxon>
        <taxon>Arthropoda</taxon>
        <taxon>Hexapoda</taxon>
        <taxon>Insecta</taxon>
        <taxon>Pterygota</taxon>
        <taxon>Neoptera</taxon>
        <taxon>Endopterygota</taxon>
        <taxon>Diptera</taxon>
        <taxon>Brachycera</taxon>
        <taxon>Muscomorpha</taxon>
        <taxon>Ephydroidea</taxon>
        <taxon>Drosophilidae</taxon>
        <taxon>Drosophila</taxon>
    </lineage>
</organism>
<feature type="chain" id="PRO_0000390706" description="Serine/threonine-protein phosphatase Pgam5, mitochondrial">
    <location>
        <begin position="1"/>
        <end position="289"/>
    </location>
</feature>
<evidence type="ECO:0000250" key="1">
    <source>
        <dbReference type="UniProtKB" id="O46084"/>
    </source>
</evidence>
<evidence type="ECO:0000255" key="2"/>
<evidence type="ECO:0000312" key="3">
    <source>
        <dbReference type="EMBL" id="EDW06075.1"/>
    </source>
</evidence>
<protein>
    <recommendedName>
        <fullName evidence="1">Serine/threonine-protein phosphatase Pgam5, mitochondrial</fullName>
        <ecNumber>3.1.3.16</ecNumber>
    </recommendedName>
    <alternativeName>
        <fullName evidence="1">Phosphoglycerate mutase family member 5 homolog</fullName>
    </alternativeName>
</protein>
<keyword id="KW-0378">Hydrolase</keyword>
<keyword id="KW-0472">Membrane</keyword>
<keyword id="KW-0496">Mitochondrion</keyword>
<keyword id="KW-1000">Mitochondrion outer membrane</keyword>
<keyword id="KW-1185">Reference proteome</keyword>